<organism>
    <name type="scientific">Saccharomyces cerevisiae (strain Lalvin EC1118 / Prise de mousse)</name>
    <name type="common">Baker's yeast</name>
    <dbReference type="NCBI Taxonomy" id="643680"/>
    <lineage>
        <taxon>Eukaryota</taxon>
        <taxon>Fungi</taxon>
        <taxon>Dikarya</taxon>
        <taxon>Ascomycota</taxon>
        <taxon>Saccharomycotina</taxon>
        <taxon>Saccharomycetes</taxon>
        <taxon>Saccharomycetales</taxon>
        <taxon>Saccharomycetaceae</taxon>
        <taxon>Saccharomyces</taxon>
    </lineage>
</organism>
<reference key="1">
    <citation type="journal article" date="2009" name="Proc. Natl. Acad. Sci. U.S.A.">
        <title>Eukaryote-to-eukaryote gene transfer events revealed by the genome sequence of the wine yeast Saccharomyces cerevisiae EC1118.</title>
        <authorList>
            <person name="Novo M."/>
            <person name="Bigey F."/>
            <person name="Beyne E."/>
            <person name="Galeote V."/>
            <person name="Gavory F."/>
            <person name="Mallet S."/>
            <person name="Cambon B."/>
            <person name="Legras J.-L."/>
            <person name="Wincker P."/>
            <person name="Casaregola S."/>
            <person name="Dequin S."/>
        </authorList>
    </citation>
    <scope>NUCLEOTIDE SEQUENCE [LARGE SCALE GENOMIC DNA]</scope>
    <source>
        <strain>Lalvin EC1118 / Prise de mousse</strain>
    </source>
</reference>
<gene>
    <name type="primary">AIM32</name>
    <name type="ORF">EC1118_1M3_1002g</name>
</gene>
<sequence>MLRITVKTLQQRASFHHSFKHISVPDLHTRAQNDQTNCYCQEINARLPSKTDPLDPHIKLPHRTPNYNKHVLLLSPGDRFAQPWKVAWNHNLDTNTNRPYNAISKLRSHLGGSPGILINAVHLQNEFIPRPKQHDEWLYFFVIPDMKLYVIKETDIEEFASFLDEGAIQAPKLSFQDYLSGKAKASQQVHEVHHRKLTRFQGETFLRDWNLVCGHYKRDAKCGEMGPDIIAAFQDEKLFPENNLALISHIGGHIFAGNVIFYKLFGREKMQNKLDSLWFGKVYPHNLKLLCENLENGKIIDEMYRGGISMN</sequence>
<accession>C8ZEF8</accession>
<protein>
    <recommendedName>
        <fullName>Altered inheritance of mitochondria protein 32</fullName>
    </recommendedName>
</protein>
<dbReference type="EMBL" id="FN393082">
    <property type="protein sequence ID" value="CAY81774.1"/>
    <property type="molecule type" value="Genomic_DNA"/>
</dbReference>
<dbReference type="SMR" id="C8ZEF8"/>
<dbReference type="HOGENOM" id="CLU_044499_1_0_1"/>
<dbReference type="OrthoDB" id="35083at4893"/>
<dbReference type="Proteomes" id="UP000000286">
    <property type="component" value="Chromosome XIII, Scaffold EC1118_1M3"/>
</dbReference>
<dbReference type="CDD" id="cd03062">
    <property type="entry name" value="TRX_Fd_Sucrase"/>
    <property type="match status" value="1"/>
</dbReference>
<dbReference type="InterPro" id="IPR009737">
    <property type="entry name" value="Aim32/Apd1-like"/>
</dbReference>
<dbReference type="InterPro" id="IPR036249">
    <property type="entry name" value="Thioredoxin-like_sf"/>
</dbReference>
<dbReference type="PANTHER" id="PTHR31902">
    <property type="entry name" value="ACTIN PATCHES DISTAL PROTEIN 1"/>
    <property type="match status" value="1"/>
</dbReference>
<dbReference type="PANTHER" id="PTHR31902:SF7">
    <property type="entry name" value="ALTERED INHERITANCE OF MITOCHONDRIA PROTEIN 32"/>
    <property type="match status" value="1"/>
</dbReference>
<dbReference type="Pfam" id="PF06999">
    <property type="entry name" value="Suc_Fer-like"/>
    <property type="match status" value="1"/>
</dbReference>
<dbReference type="SUPFAM" id="SSF52833">
    <property type="entry name" value="Thioredoxin-like"/>
    <property type="match status" value="1"/>
</dbReference>
<comment type="similarity">
    <text evidence="1">Belongs to the AIM32 family.</text>
</comment>
<feature type="chain" id="PRO_0000399706" description="Altered inheritance of mitochondria protein 32">
    <location>
        <begin position="1"/>
        <end position="311"/>
    </location>
</feature>
<name>AIM32_YEAS8</name>
<proteinExistence type="inferred from homology"/>
<evidence type="ECO:0000305" key="1"/>